<sequence length="146" mass="16695">MIQKINILDSSQSGVKNGADSEAVLAALIEHLELINPSGRLSQNTRSAMLQLREEEWSEFFFWLLNSLECLDYVIINLTPESKKTLMSEHRNNIQVAIDALYSQRRRKSPGDESETLTRRNDAIFGNHVWQTFAQYFPPGLEKPSV</sequence>
<protein>
    <recommendedName>
        <fullName>Uncharacterized protein YcgY</fullName>
    </recommendedName>
</protein>
<reference key="1">
    <citation type="journal article" date="1997" name="Science">
        <title>The complete genome sequence of Escherichia coli K-12.</title>
        <authorList>
            <person name="Blattner F.R."/>
            <person name="Plunkett G. III"/>
            <person name="Bloch C.A."/>
            <person name="Perna N.T."/>
            <person name="Burland V."/>
            <person name="Riley M."/>
            <person name="Collado-Vides J."/>
            <person name="Glasner J.D."/>
            <person name="Rode C.K."/>
            <person name="Mayhew G.F."/>
            <person name="Gregor J."/>
            <person name="Davis N.W."/>
            <person name="Kirkpatrick H.A."/>
            <person name="Goeden M.A."/>
            <person name="Rose D.J."/>
            <person name="Mau B."/>
            <person name="Shao Y."/>
        </authorList>
    </citation>
    <scope>NUCLEOTIDE SEQUENCE [LARGE SCALE GENOMIC DNA]</scope>
    <source>
        <strain>K12 / MG1655 / ATCC 47076</strain>
    </source>
</reference>
<reference key="2">
    <citation type="journal article" date="2006" name="Mol. Syst. Biol.">
        <title>Highly accurate genome sequences of Escherichia coli K-12 strains MG1655 and W3110.</title>
        <authorList>
            <person name="Hayashi K."/>
            <person name="Morooka N."/>
            <person name="Yamamoto Y."/>
            <person name="Fujita K."/>
            <person name="Isono K."/>
            <person name="Choi S."/>
            <person name="Ohtsubo E."/>
            <person name="Baba T."/>
            <person name="Wanner B.L."/>
            <person name="Mori H."/>
            <person name="Horiuchi T."/>
        </authorList>
    </citation>
    <scope>NUCLEOTIDE SEQUENCE [LARGE SCALE GENOMIC DNA]</scope>
    <source>
        <strain>K12 / W3110 / ATCC 27325 / DSM 5911</strain>
    </source>
</reference>
<accession>P76012</accession>
<accession>Q2MBG5</accession>
<gene>
    <name type="primary">ycgY</name>
    <name type="ordered locus">b1196</name>
    <name type="ordered locus">JW1185</name>
</gene>
<name>YCGY_ECOLI</name>
<proteinExistence type="predicted"/>
<dbReference type="EMBL" id="U00096">
    <property type="protein sequence ID" value="AAC74280.1"/>
    <property type="molecule type" value="Genomic_DNA"/>
</dbReference>
<dbReference type="EMBL" id="AP009048">
    <property type="protein sequence ID" value="BAE76391.1"/>
    <property type="molecule type" value="Genomic_DNA"/>
</dbReference>
<dbReference type="PIR" id="A64866">
    <property type="entry name" value="A64866"/>
</dbReference>
<dbReference type="RefSeq" id="NP_415714.1">
    <property type="nucleotide sequence ID" value="NC_000913.3"/>
</dbReference>
<dbReference type="RefSeq" id="WP_000615067.1">
    <property type="nucleotide sequence ID" value="NZ_STEB01000023.1"/>
</dbReference>
<dbReference type="SMR" id="P76012"/>
<dbReference type="BioGRID" id="4260953">
    <property type="interactions" value="20"/>
</dbReference>
<dbReference type="FunCoup" id="P76012">
    <property type="interactions" value="221"/>
</dbReference>
<dbReference type="IntAct" id="P76012">
    <property type="interactions" value="10"/>
</dbReference>
<dbReference type="STRING" id="511145.b1196"/>
<dbReference type="PaxDb" id="511145-b1196"/>
<dbReference type="EnsemblBacteria" id="AAC74280">
    <property type="protein sequence ID" value="AAC74280"/>
    <property type="gene ID" value="b1196"/>
</dbReference>
<dbReference type="GeneID" id="75203309"/>
<dbReference type="GeneID" id="945761"/>
<dbReference type="KEGG" id="ecj:JW1185"/>
<dbReference type="KEGG" id="eco:b1196"/>
<dbReference type="KEGG" id="ecoc:C3026_07035"/>
<dbReference type="PATRIC" id="fig|511145.12.peg.1242"/>
<dbReference type="EchoBASE" id="EB4023"/>
<dbReference type="eggNOG" id="ENOG5033XM0">
    <property type="taxonomic scope" value="Bacteria"/>
</dbReference>
<dbReference type="HOGENOM" id="CLU_2023203_0_0_6"/>
<dbReference type="InParanoid" id="P76012"/>
<dbReference type="OMA" id="QRRCKSP"/>
<dbReference type="BioCyc" id="EcoCyc:G6625-MONOMER"/>
<dbReference type="PRO" id="PR:P76012"/>
<dbReference type="Proteomes" id="UP000000625">
    <property type="component" value="Chromosome"/>
</dbReference>
<feature type="chain" id="PRO_0000168860" description="Uncharacterized protein YcgY">
    <location>
        <begin position="1"/>
        <end position="146"/>
    </location>
</feature>
<organism>
    <name type="scientific">Escherichia coli (strain K12)</name>
    <dbReference type="NCBI Taxonomy" id="83333"/>
    <lineage>
        <taxon>Bacteria</taxon>
        <taxon>Pseudomonadati</taxon>
        <taxon>Pseudomonadota</taxon>
        <taxon>Gammaproteobacteria</taxon>
        <taxon>Enterobacterales</taxon>
        <taxon>Enterobacteriaceae</taxon>
        <taxon>Escherichia</taxon>
    </lineage>
</organism>
<keyword id="KW-1185">Reference proteome</keyword>